<accession>C4ZVS5</accession>
<dbReference type="EC" id="2.7.1.2" evidence="1"/>
<dbReference type="EMBL" id="CP001396">
    <property type="protein sequence ID" value="ACR63305.1"/>
    <property type="molecule type" value="Genomic_DNA"/>
</dbReference>
<dbReference type="RefSeq" id="WP_000170346.1">
    <property type="nucleotide sequence ID" value="NC_012759.1"/>
</dbReference>
<dbReference type="SMR" id="C4ZVS5"/>
<dbReference type="GeneID" id="75202543"/>
<dbReference type="KEGG" id="ebw:BWG_2156"/>
<dbReference type="HOGENOM" id="CLU_042582_1_0_6"/>
<dbReference type="GO" id="GO:0005829">
    <property type="term" value="C:cytosol"/>
    <property type="evidence" value="ECO:0007669"/>
    <property type="project" value="TreeGrafter"/>
</dbReference>
<dbReference type="GO" id="GO:0005524">
    <property type="term" value="F:ATP binding"/>
    <property type="evidence" value="ECO:0007669"/>
    <property type="project" value="UniProtKB-UniRule"/>
</dbReference>
<dbReference type="GO" id="GO:0005536">
    <property type="term" value="F:D-glucose binding"/>
    <property type="evidence" value="ECO:0007669"/>
    <property type="project" value="InterPro"/>
</dbReference>
<dbReference type="GO" id="GO:0004340">
    <property type="term" value="F:glucokinase activity"/>
    <property type="evidence" value="ECO:0007669"/>
    <property type="project" value="UniProtKB-UniRule"/>
</dbReference>
<dbReference type="GO" id="GO:0006096">
    <property type="term" value="P:glycolytic process"/>
    <property type="evidence" value="ECO:0007669"/>
    <property type="project" value="UniProtKB-UniRule"/>
</dbReference>
<dbReference type="CDD" id="cd24008">
    <property type="entry name" value="ASKHA_NBD_GLK"/>
    <property type="match status" value="1"/>
</dbReference>
<dbReference type="FunFam" id="3.30.420.40:FF:000045">
    <property type="entry name" value="Glucokinase"/>
    <property type="match status" value="1"/>
</dbReference>
<dbReference type="FunFam" id="3.40.367.20:FF:000002">
    <property type="entry name" value="Glucokinase"/>
    <property type="match status" value="1"/>
</dbReference>
<dbReference type="Gene3D" id="3.30.420.40">
    <property type="match status" value="1"/>
</dbReference>
<dbReference type="Gene3D" id="3.40.367.20">
    <property type="match status" value="1"/>
</dbReference>
<dbReference type="HAMAP" id="MF_00524">
    <property type="entry name" value="Glucokinase"/>
    <property type="match status" value="1"/>
</dbReference>
<dbReference type="InterPro" id="IPR043129">
    <property type="entry name" value="ATPase_NBD"/>
</dbReference>
<dbReference type="InterPro" id="IPR050201">
    <property type="entry name" value="Bacterial_glucokinase"/>
</dbReference>
<dbReference type="InterPro" id="IPR003836">
    <property type="entry name" value="Glucokinase"/>
</dbReference>
<dbReference type="NCBIfam" id="TIGR00749">
    <property type="entry name" value="glk"/>
    <property type="match status" value="1"/>
</dbReference>
<dbReference type="NCBIfam" id="NF001414">
    <property type="entry name" value="PRK00292.1-1"/>
    <property type="match status" value="1"/>
</dbReference>
<dbReference type="NCBIfam" id="NF001416">
    <property type="entry name" value="PRK00292.1-3"/>
    <property type="match status" value="1"/>
</dbReference>
<dbReference type="PANTHER" id="PTHR47690">
    <property type="entry name" value="GLUCOKINASE"/>
    <property type="match status" value="1"/>
</dbReference>
<dbReference type="PANTHER" id="PTHR47690:SF1">
    <property type="entry name" value="GLUCOKINASE"/>
    <property type="match status" value="1"/>
</dbReference>
<dbReference type="Pfam" id="PF02685">
    <property type="entry name" value="Glucokinase"/>
    <property type="match status" value="1"/>
</dbReference>
<dbReference type="SUPFAM" id="SSF53067">
    <property type="entry name" value="Actin-like ATPase domain"/>
    <property type="match status" value="1"/>
</dbReference>
<comment type="catalytic activity">
    <reaction evidence="1">
        <text>D-glucose + ATP = D-glucose 6-phosphate + ADP + H(+)</text>
        <dbReference type="Rhea" id="RHEA:17825"/>
        <dbReference type="ChEBI" id="CHEBI:4167"/>
        <dbReference type="ChEBI" id="CHEBI:15378"/>
        <dbReference type="ChEBI" id="CHEBI:30616"/>
        <dbReference type="ChEBI" id="CHEBI:61548"/>
        <dbReference type="ChEBI" id="CHEBI:456216"/>
        <dbReference type="EC" id="2.7.1.2"/>
    </reaction>
</comment>
<comment type="subcellular location">
    <subcellularLocation>
        <location evidence="1">Cytoplasm</location>
    </subcellularLocation>
</comment>
<comment type="similarity">
    <text evidence="1">Belongs to the bacterial glucokinase family.</text>
</comment>
<protein>
    <recommendedName>
        <fullName evidence="1">Glucokinase</fullName>
        <ecNumber evidence="1">2.7.1.2</ecNumber>
    </recommendedName>
    <alternativeName>
        <fullName evidence="1">Glucose kinase</fullName>
    </alternativeName>
</protein>
<gene>
    <name evidence="1" type="primary">glk</name>
    <name type="ordered locus">BWG_2156</name>
</gene>
<reference key="1">
    <citation type="journal article" date="2009" name="J. Bacteriol.">
        <title>Genomic sequencing reveals regulatory mutations and recombinational events in the widely used MC4100 lineage of Escherichia coli K-12.</title>
        <authorList>
            <person name="Ferenci T."/>
            <person name="Zhou Z."/>
            <person name="Betteridge T."/>
            <person name="Ren Y."/>
            <person name="Liu Y."/>
            <person name="Feng L."/>
            <person name="Reeves P.R."/>
            <person name="Wang L."/>
        </authorList>
    </citation>
    <scope>NUCLEOTIDE SEQUENCE [LARGE SCALE GENOMIC DNA]</scope>
    <source>
        <strain>K12 / MC4100 / BW2952</strain>
    </source>
</reference>
<name>GLK_ECOBW</name>
<keyword id="KW-0067">ATP-binding</keyword>
<keyword id="KW-0963">Cytoplasm</keyword>
<keyword id="KW-0324">Glycolysis</keyword>
<keyword id="KW-0418">Kinase</keyword>
<keyword id="KW-0547">Nucleotide-binding</keyword>
<keyword id="KW-0808">Transferase</keyword>
<sequence>MTKYALVGDVGGTNARLALCDIASGEISQAKTYSGLDYPSLEAVIRVYLEEHKVEVKDGCIAIACPITGDWVAMTNHTWAFSIAEMKKNLGFSHLEIINDFTAVSMAIPMLKKEHLIQFGGAEPVEGKPIAVYGAGTGLGVAHLVHVDKRWVSLPGEGGHVDFAPNSEEEAIILEILRAEIGHVSAERVLSGPGLVNLYRAIVKADNRLPENLKPKDITERALADSCTDCRRALSLFCVIMGRFGGNLALNLGTFGGVFIAGGIVPRFLEFFKASGFRAAFEDKGRFKEYVHDIPVYLIVHDNPGLLGSGAHLRQTLGHIL</sequence>
<evidence type="ECO:0000255" key="1">
    <source>
        <dbReference type="HAMAP-Rule" id="MF_00524"/>
    </source>
</evidence>
<proteinExistence type="inferred from homology"/>
<feature type="chain" id="PRO_1000211757" description="Glucokinase">
    <location>
        <begin position="1"/>
        <end position="321"/>
    </location>
</feature>
<feature type="binding site" evidence="1">
    <location>
        <begin position="8"/>
        <end position="13"/>
    </location>
    <ligand>
        <name>ATP</name>
        <dbReference type="ChEBI" id="CHEBI:30616"/>
    </ligand>
</feature>
<organism>
    <name type="scientific">Escherichia coli (strain K12 / MC4100 / BW2952)</name>
    <dbReference type="NCBI Taxonomy" id="595496"/>
    <lineage>
        <taxon>Bacteria</taxon>
        <taxon>Pseudomonadati</taxon>
        <taxon>Pseudomonadota</taxon>
        <taxon>Gammaproteobacteria</taxon>
        <taxon>Enterobacterales</taxon>
        <taxon>Enterobacteriaceae</taxon>
        <taxon>Escherichia</taxon>
    </lineage>
</organism>